<accession>O70479</accession>
<accession>Q3TH85</accession>
<accession>Q3UGQ5</accession>
<accession>Q8BV61</accession>
<accession>Q8BZK5</accession>
<protein>
    <recommendedName>
        <fullName>BTB/POZ domain-containing adapter for CUL3-mediated RhoA degradation protein 2</fullName>
    </recommendedName>
    <alternativeName>
        <fullName>BTB/POZ domain-containing protein TNFAIP1</fullName>
    </alternativeName>
    <alternativeName>
        <fullName>Tumor necrosis factor, alpha-induced protein 1, endothelial</fullName>
    </alternativeName>
</protein>
<sequence>MSGDTCLCPASGAKPKISGFKGGGLGNKYVQLNVGGSLYYTTVRALTRHDTMLKAMFSGRMEVLTDKEGWILIDRCGKHFGTILNYLRDDTITLPQSRQEIQELMAEAKYYLIQGLVSTCQTALQDKKDSYQPVCNIPIITSLREEDRLIESSTKPVVKLLYNRSNNKYSYTSNSDDHLLKNIELFDKLSLRFNGRVLFIKDVIGDEICCWSFYGQGRKLAEVCCTSIVYATEKKQTKVEFPEARIYEETLNVLLYETPRVPDNSLLEATSRSRSQASPSEDEDTFELRDRVRRIHVKRYSTYDDRQLGHQSTHRD</sequence>
<comment type="function">
    <text evidence="1">Substrate-specific adapter of a BCR (BTB-CUL3-RBX1) E3 ubiquitin-protein ligase complex involved in regulation of cytoskeleton structure. The BCR(TNFAIP1) E3 ubiquitin ligase complex mediates the ubiquitination of RHOA, leading to its degradation by the proteasome, thereby regulating the actin cytoskeleton and cell migration. Its interaction with RHOB may regulate apoptosis. May enhance the PCNA-dependent DNA polymerase delta activity (By similarity).</text>
</comment>
<comment type="pathway">
    <text>Protein modification; protein ubiquitination.</text>
</comment>
<comment type="subunit">
    <text evidence="1">Component of the BCR(TNFAIP1) E3 ubiquitin ligase complex, at least composed of CUL3, TNFAIP1/BACURD2 and RBX1. Interacts with RHOA; with a preference for RhoA-GDP. Interacts with RHOB. Interacts with PCNA. Interacts with CSNK2B (By similarity).</text>
</comment>
<comment type="subcellular location">
    <subcellularLocation>
        <location evidence="1">Cytoplasm</location>
    </subcellularLocation>
    <subcellularLocation>
        <location evidence="1">Nucleus</location>
    </subcellularLocation>
    <subcellularLocation>
        <location evidence="1">Endosome</location>
    </subcellularLocation>
    <text evidence="1">Colocalizes with RHOB in endosomes.</text>
</comment>
<comment type="PTM">
    <text evidence="1">Phosphorylation at Ser-280 by CK2 facilitates the nucleus localization and increases interaction with PCNA.</text>
</comment>
<comment type="similarity">
    <text evidence="5">Belongs to the BACURD family.</text>
</comment>
<reference key="1">
    <citation type="journal article" date="1998" name="Biochim. Biophys. Acta">
        <title>Structure and chromosomal mapping of the TNF-alpha inducible endothelial protein 1 (Edp1) gene in the mouse.</title>
        <authorList>
            <person name="Swift S."/>
            <person name="Blackburn C."/>
            <person name="Morahan G."/>
            <person name="Ashworth A."/>
        </authorList>
    </citation>
    <scope>NUCLEOTIDE SEQUENCE [GENOMIC DNA]</scope>
</reference>
<reference key="2">
    <citation type="journal article" date="2005" name="Science">
        <title>The transcriptional landscape of the mammalian genome.</title>
        <authorList>
            <person name="Carninci P."/>
            <person name="Kasukawa T."/>
            <person name="Katayama S."/>
            <person name="Gough J."/>
            <person name="Frith M.C."/>
            <person name="Maeda N."/>
            <person name="Oyama R."/>
            <person name="Ravasi T."/>
            <person name="Lenhard B."/>
            <person name="Wells C."/>
            <person name="Kodzius R."/>
            <person name="Shimokawa K."/>
            <person name="Bajic V.B."/>
            <person name="Brenner S.E."/>
            <person name="Batalov S."/>
            <person name="Forrest A.R."/>
            <person name="Zavolan M."/>
            <person name="Davis M.J."/>
            <person name="Wilming L.G."/>
            <person name="Aidinis V."/>
            <person name="Allen J.E."/>
            <person name="Ambesi-Impiombato A."/>
            <person name="Apweiler R."/>
            <person name="Aturaliya R.N."/>
            <person name="Bailey T.L."/>
            <person name="Bansal M."/>
            <person name="Baxter L."/>
            <person name="Beisel K.W."/>
            <person name="Bersano T."/>
            <person name="Bono H."/>
            <person name="Chalk A.M."/>
            <person name="Chiu K.P."/>
            <person name="Choudhary V."/>
            <person name="Christoffels A."/>
            <person name="Clutterbuck D.R."/>
            <person name="Crowe M.L."/>
            <person name="Dalla E."/>
            <person name="Dalrymple B.P."/>
            <person name="de Bono B."/>
            <person name="Della Gatta G."/>
            <person name="di Bernardo D."/>
            <person name="Down T."/>
            <person name="Engstrom P."/>
            <person name="Fagiolini M."/>
            <person name="Faulkner G."/>
            <person name="Fletcher C.F."/>
            <person name="Fukushima T."/>
            <person name="Furuno M."/>
            <person name="Futaki S."/>
            <person name="Gariboldi M."/>
            <person name="Georgii-Hemming P."/>
            <person name="Gingeras T.R."/>
            <person name="Gojobori T."/>
            <person name="Green R.E."/>
            <person name="Gustincich S."/>
            <person name="Harbers M."/>
            <person name="Hayashi Y."/>
            <person name="Hensch T.K."/>
            <person name="Hirokawa N."/>
            <person name="Hill D."/>
            <person name="Huminiecki L."/>
            <person name="Iacono M."/>
            <person name="Ikeo K."/>
            <person name="Iwama A."/>
            <person name="Ishikawa T."/>
            <person name="Jakt M."/>
            <person name="Kanapin A."/>
            <person name="Katoh M."/>
            <person name="Kawasawa Y."/>
            <person name="Kelso J."/>
            <person name="Kitamura H."/>
            <person name="Kitano H."/>
            <person name="Kollias G."/>
            <person name="Krishnan S.P."/>
            <person name="Kruger A."/>
            <person name="Kummerfeld S.K."/>
            <person name="Kurochkin I.V."/>
            <person name="Lareau L.F."/>
            <person name="Lazarevic D."/>
            <person name="Lipovich L."/>
            <person name="Liu J."/>
            <person name="Liuni S."/>
            <person name="McWilliam S."/>
            <person name="Madan Babu M."/>
            <person name="Madera M."/>
            <person name="Marchionni L."/>
            <person name="Matsuda H."/>
            <person name="Matsuzawa S."/>
            <person name="Miki H."/>
            <person name="Mignone F."/>
            <person name="Miyake S."/>
            <person name="Morris K."/>
            <person name="Mottagui-Tabar S."/>
            <person name="Mulder N."/>
            <person name="Nakano N."/>
            <person name="Nakauchi H."/>
            <person name="Ng P."/>
            <person name="Nilsson R."/>
            <person name="Nishiguchi S."/>
            <person name="Nishikawa S."/>
            <person name="Nori F."/>
            <person name="Ohara O."/>
            <person name="Okazaki Y."/>
            <person name="Orlando V."/>
            <person name="Pang K.C."/>
            <person name="Pavan W.J."/>
            <person name="Pavesi G."/>
            <person name="Pesole G."/>
            <person name="Petrovsky N."/>
            <person name="Piazza S."/>
            <person name="Reed J."/>
            <person name="Reid J.F."/>
            <person name="Ring B.Z."/>
            <person name="Ringwald M."/>
            <person name="Rost B."/>
            <person name="Ruan Y."/>
            <person name="Salzberg S.L."/>
            <person name="Sandelin A."/>
            <person name="Schneider C."/>
            <person name="Schoenbach C."/>
            <person name="Sekiguchi K."/>
            <person name="Semple C.A."/>
            <person name="Seno S."/>
            <person name="Sessa L."/>
            <person name="Sheng Y."/>
            <person name="Shibata Y."/>
            <person name="Shimada H."/>
            <person name="Shimada K."/>
            <person name="Silva D."/>
            <person name="Sinclair B."/>
            <person name="Sperling S."/>
            <person name="Stupka E."/>
            <person name="Sugiura K."/>
            <person name="Sultana R."/>
            <person name="Takenaka Y."/>
            <person name="Taki K."/>
            <person name="Tammoja K."/>
            <person name="Tan S.L."/>
            <person name="Tang S."/>
            <person name="Taylor M.S."/>
            <person name="Tegner J."/>
            <person name="Teichmann S.A."/>
            <person name="Ueda H.R."/>
            <person name="van Nimwegen E."/>
            <person name="Verardo R."/>
            <person name="Wei C.L."/>
            <person name="Yagi K."/>
            <person name="Yamanishi H."/>
            <person name="Zabarovsky E."/>
            <person name="Zhu S."/>
            <person name="Zimmer A."/>
            <person name="Hide W."/>
            <person name="Bult C."/>
            <person name="Grimmond S.M."/>
            <person name="Teasdale R.D."/>
            <person name="Liu E.T."/>
            <person name="Brusic V."/>
            <person name="Quackenbush J."/>
            <person name="Wahlestedt C."/>
            <person name="Mattick J.S."/>
            <person name="Hume D.A."/>
            <person name="Kai C."/>
            <person name="Sasaki D."/>
            <person name="Tomaru Y."/>
            <person name="Fukuda S."/>
            <person name="Kanamori-Katayama M."/>
            <person name="Suzuki M."/>
            <person name="Aoki J."/>
            <person name="Arakawa T."/>
            <person name="Iida J."/>
            <person name="Imamura K."/>
            <person name="Itoh M."/>
            <person name="Kato T."/>
            <person name="Kawaji H."/>
            <person name="Kawagashira N."/>
            <person name="Kawashima T."/>
            <person name="Kojima M."/>
            <person name="Kondo S."/>
            <person name="Konno H."/>
            <person name="Nakano K."/>
            <person name="Ninomiya N."/>
            <person name="Nishio T."/>
            <person name="Okada M."/>
            <person name="Plessy C."/>
            <person name="Shibata K."/>
            <person name="Shiraki T."/>
            <person name="Suzuki S."/>
            <person name="Tagami M."/>
            <person name="Waki K."/>
            <person name="Watahiki A."/>
            <person name="Okamura-Oho Y."/>
            <person name="Suzuki H."/>
            <person name="Kawai J."/>
            <person name="Hayashizaki Y."/>
        </authorList>
    </citation>
    <scope>NUCLEOTIDE SEQUENCE [LARGE SCALE MRNA]</scope>
    <source>
        <strain>C57BL/6J</strain>
        <tissue>Amnion</tissue>
        <tissue>Diencephalon</tissue>
        <tissue>Lung</tissue>
        <tissue>Thymus</tissue>
    </source>
</reference>
<reference key="3">
    <citation type="journal article" date="2009" name="PLoS Biol.">
        <title>Lineage-specific biology revealed by a finished genome assembly of the mouse.</title>
        <authorList>
            <person name="Church D.M."/>
            <person name="Goodstadt L."/>
            <person name="Hillier L.W."/>
            <person name="Zody M.C."/>
            <person name="Goldstein S."/>
            <person name="She X."/>
            <person name="Bult C.J."/>
            <person name="Agarwala R."/>
            <person name="Cherry J.L."/>
            <person name="DiCuccio M."/>
            <person name="Hlavina W."/>
            <person name="Kapustin Y."/>
            <person name="Meric P."/>
            <person name="Maglott D."/>
            <person name="Birtle Z."/>
            <person name="Marques A.C."/>
            <person name="Graves T."/>
            <person name="Zhou S."/>
            <person name="Teague B."/>
            <person name="Potamousis K."/>
            <person name="Churas C."/>
            <person name="Place M."/>
            <person name="Herschleb J."/>
            <person name="Runnheim R."/>
            <person name="Forrest D."/>
            <person name="Amos-Landgraf J."/>
            <person name="Schwartz D.C."/>
            <person name="Cheng Z."/>
            <person name="Lindblad-Toh K."/>
            <person name="Eichler E.E."/>
            <person name="Ponting C.P."/>
        </authorList>
    </citation>
    <scope>NUCLEOTIDE SEQUENCE [LARGE SCALE GENOMIC DNA]</scope>
    <source>
        <strain>C57BL/6J</strain>
    </source>
</reference>
<reference key="4">
    <citation type="journal article" date="2004" name="Genome Res.">
        <title>The status, quality, and expansion of the NIH full-length cDNA project: the Mammalian Gene Collection (MGC).</title>
        <authorList>
            <consortium name="The MGC Project Team"/>
        </authorList>
    </citation>
    <scope>NUCLEOTIDE SEQUENCE [LARGE SCALE MRNA]</scope>
    <source>
        <strain>FVB/N</strain>
        <tissue>Mammary tumor</tissue>
    </source>
</reference>
<feature type="chain" id="PRO_0000331247" description="BTB/POZ domain-containing adapter for CUL3-mediated RhoA degradation protein 2">
    <location>
        <begin position="1"/>
        <end position="316"/>
    </location>
</feature>
<feature type="domain" description="BTB" evidence="3">
    <location>
        <begin position="28"/>
        <end position="96"/>
    </location>
</feature>
<feature type="region of interest" description="Disordered" evidence="4">
    <location>
        <begin position="268"/>
        <end position="288"/>
    </location>
</feature>
<feature type="compositionally biased region" description="Polar residues" evidence="4">
    <location>
        <begin position="268"/>
        <end position="279"/>
    </location>
</feature>
<feature type="modified residue" description="Phosphoserine" evidence="2">
    <location>
        <position position="278"/>
    </location>
</feature>
<feature type="modified residue" description="Phosphoserine; by CK2" evidence="2">
    <location>
        <position position="280"/>
    </location>
</feature>
<feature type="sequence conflict" description="In Ref. 2; BAC28668." evidence="5" ref="2">
    <original>L</original>
    <variation>H</variation>
    <location>
        <position position="94"/>
    </location>
</feature>
<feature type="sequence conflict" description="In Ref. 2; BAE40313." evidence="5" ref="2">
    <original>E</original>
    <variation>G</variation>
    <location>
        <position position="100"/>
    </location>
</feature>
<feature type="sequence conflict" description="In Ref. 2; BAE28152." evidence="5" ref="2">
    <original>R</original>
    <variation>G</variation>
    <location>
        <position position="245"/>
    </location>
</feature>
<name>BACD2_MOUSE</name>
<keyword id="KW-0963">Cytoplasm</keyword>
<keyword id="KW-0967">Endosome</keyword>
<keyword id="KW-0539">Nucleus</keyword>
<keyword id="KW-0597">Phosphoprotein</keyword>
<keyword id="KW-1185">Reference proteome</keyword>
<keyword id="KW-0833">Ubl conjugation pathway</keyword>
<proteinExistence type="evidence at transcript level"/>
<organism>
    <name type="scientific">Mus musculus</name>
    <name type="common">Mouse</name>
    <dbReference type="NCBI Taxonomy" id="10090"/>
    <lineage>
        <taxon>Eukaryota</taxon>
        <taxon>Metazoa</taxon>
        <taxon>Chordata</taxon>
        <taxon>Craniata</taxon>
        <taxon>Vertebrata</taxon>
        <taxon>Euteleostomi</taxon>
        <taxon>Mammalia</taxon>
        <taxon>Eutheria</taxon>
        <taxon>Euarchontoglires</taxon>
        <taxon>Glires</taxon>
        <taxon>Rodentia</taxon>
        <taxon>Myomorpha</taxon>
        <taxon>Muroidea</taxon>
        <taxon>Muridae</taxon>
        <taxon>Murinae</taxon>
        <taxon>Mus</taxon>
        <taxon>Mus</taxon>
    </lineage>
</organism>
<dbReference type="EMBL" id="AF061346">
    <property type="protein sequence ID" value="AAC78826.1"/>
    <property type="molecule type" value="Genomic_DNA"/>
</dbReference>
<dbReference type="EMBL" id="AF061341">
    <property type="protein sequence ID" value="AAC78826.1"/>
    <property type="status" value="JOINED"/>
    <property type="molecule type" value="Genomic_DNA"/>
</dbReference>
<dbReference type="EMBL" id="AF061342">
    <property type="protein sequence ID" value="AAC78826.1"/>
    <property type="status" value="JOINED"/>
    <property type="molecule type" value="Genomic_DNA"/>
</dbReference>
<dbReference type="EMBL" id="AF061343">
    <property type="protein sequence ID" value="AAC78826.1"/>
    <property type="status" value="JOINED"/>
    <property type="molecule type" value="Genomic_DNA"/>
</dbReference>
<dbReference type="EMBL" id="AF061344">
    <property type="protein sequence ID" value="AAC78826.1"/>
    <property type="status" value="JOINED"/>
    <property type="molecule type" value="Genomic_DNA"/>
</dbReference>
<dbReference type="EMBL" id="AF061345">
    <property type="protein sequence ID" value="AAC78826.1"/>
    <property type="status" value="JOINED"/>
    <property type="molecule type" value="Genomic_DNA"/>
</dbReference>
<dbReference type="EMBL" id="AK004593">
    <property type="protein sequence ID" value="BAB23395.1"/>
    <property type="molecule type" value="mRNA"/>
</dbReference>
<dbReference type="EMBL" id="AK034305">
    <property type="protein sequence ID" value="BAC28668.1"/>
    <property type="molecule type" value="mRNA"/>
</dbReference>
<dbReference type="EMBL" id="AK079869">
    <property type="protein sequence ID" value="BAC37770.1"/>
    <property type="molecule type" value="mRNA"/>
</dbReference>
<dbReference type="EMBL" id="AK147809">
    <property type="protein sequence ID" value="BAE28152.1"/>
    <property type="molecule type" value="mRNA"/>
</dbReference>
<dbReference type="EMBL" id="AK168386">
    <property type="protein sequence ID" value="BAE40313.1"/>
    <property type="molecule type" value="mRNA"/>
</dbReference>
<dbReference type="EMBL" id="AK168704">
    <property type="protein sequence ID" value="BAE40546.1"/>
    <property type="molecule type" value="mRNA"/>
</dbReference>
<dbReference type="EMBL" id="AL591177">
    <property type="status" value="NOT_ANNOTATED_CDS"/>
    <property type="molecule type" value="Genomic_DNA"/>
</dbReference>
<dbReference type="EMBL" id="BC003906">
    <property type="protein sequence ID" value="AAH03906.1"/>
    <property type="molecule type" value="mRNA"/>
</dbReference>
<dbReference type="CCDS" id="CCDS25110.1"/>
<dbReference type="RefSeq" id="NP_001152864.1">
    <property type="nucleotide sequence ID" value="NM_001159392.1"/>
</dbReference>
<dbReference type="RefSeq" id="NP_033421.3">
    <property type="nucleotide sequence ID" value="NM_009395.4"/>
</dbReference>
<dbReference type="SMR" id="O70479"/>
<dbReference type="BioGRID" id="204241">
    <property type="interactions" value="1"/>
</dbReference>
<dbReference type="FunCoup" id="O70479">
    <property type="interactions" value="744"/>
</dbReference>
<dbReference type="MINT" id="O70479"/>
<dbReference type="STRING" id="10090.ENSMUSP00000103912"/>
<dbReference type="iPTMnet" id="O70479"/>
<dbReference type="PhosphoSitePlus" id="O70479"/>
<dbReference type="PaxDb" id="10090-ENSMUSP00000103912"/>
<dbReference type="PeptideAtlas" id="O70479"/>
<dbReference type="ProteomicsDB" id="273533"/>
<dbReference type="Antibodypedia" id="2839">
    <property type="antibodies" value="287 antibodies from 32 providers"/>
</dbReference>
<dbReference type="DNASU" id="21927"/>
<dbReference type="Ensembl" id="ENSMUST00000017759.9">
    <property type="protein sequence ID" value="ENSMUSP00000017759.3"/>
    <property type="gene ID" value="ENSMUSG00000017615.13"/>
</dbReference>
<dbReference type="Ensembl" id="ENSMUST00000108277.3">
    <property type="protein sequence ID" value="ENSMUSP00000103912.3"/>
    <property type="gene ID" value="ENSMUSG00000017615.13"/>
</dbReference>
<dbReference type="GeneID" id="21927"/>
<dbReference type="KEGG" id="mmu:21927"/>
<dbReference type="UCSC" id="uc007kjq.2">
    <property type="organism name" value="mouse"/>
</dbReference>
<dbReference type="AGR" id="MGI:104961"/>
<dbReference type="CTD" id="7126"/>
<dbReference type="MGI" id="MGI:104961">
    <property type="gene designation" value="Tnfaip1"/>
</dbReference>
<dbReference type="VEuPathDB" id="HostDB:ENSMUSG00000017615"/>
<dbReference type="eggNOG" id="KOG2716">
    <property type="taxonomic scope" value="Eukaryota"/>
</dbReference>
<dbReference type="GeneTree" id="ENSGT00950000183143"/>
<dbReference type="HOGENOM" id="CLU_060008_0_0_1"/>
<dbReference type="InParanoid" id="O70479"/>
<dbReference type="OMA" id="EMSGDTC"/>
<dbReference type="OrthoDB" id="2333377at2759"/>
<dbReference type="PhylomeDB" id="O70479"/>
<dbReference type="TreeFam" id="TF315649"/>
<dbReference type="Reactome" id="R-MMU-9696264">
    <property type="pathway name" value="RND3 GTPase cycle"/>
</dbReference>
<dbReference type="Reactome" id="R-MMU-9696270">
    <property type="pathway name" value="RND2 GTPase cycle"/>
</dbReference>
<dbReference type="UniPathway" id="UPA00143"/>
<dbReference type="BioGRID-ORCS" id="21927">
    <property type="hits" value="1 hit in 75 CRISPR screens"/>
</dbReference>
<dbReference type="ChiTaRS" id="Tnfaip1">
    <property type="organism name" value="mouse"/>
</dbReference>
<dbReference type="PRO" id="PR:O70479"/>
<dbReference type="Proteomes" id="UP000000589">
    <property type="component" value="Chromosome 11"/>
</dbReference>
<dbReference type="RNAct" id="O70479">
    <property type="molecule type" value="protein"/>
</dbReference>
<dbReference type="Bgee" id="ENSMUSG00000017615">
    <property type="expression patterns" value="Expressed in paneth cell and 272 other cell types or tissues"/>
</dbReference>
<dbReference type="GO" id="GO:0031463">
    <property type="term" value="C:Cul3-RING ubiquitin ligase complex"/>
    <property type="evidence" value="ECO:0000250"/>
    <property type="project" value="UniProtKB"/>
</dbReference>
<dbReference type="GO" id="GO:0005737">
    <property type="term" value="C:cytoplasm"/>
    <property type="evidence" value="ECO:0000250"/>
    <property type="project" value="UniProtKB"/>
</dbReference>
<dbReference type="GO" id="GO:0005768">
    <property type="term" value="C:endosome"/>
    <property type="evidence" value="ECO:0000250"/>
    <property type="project" value="UniProtKB"/>
</dbReference>
<dbReference type="GO" id="GO:0005634">
    <property type="term" value="C:nucleus"/>
    <property type="evidence" value="ECO:0007669"/>
    <property type="project" value="UniProtKB-SubCell"/>
</dbReference>
<dbReference type="GO" id="GO:0030332">
    <property type="term" value="F:cyclin binding"/>
    <property type="evidence" value="ECO:0007669"/>
    <property type="project" value="Ensembl"/>
</dbReference>
<dbReference type="GO" id="GO:0042802">
    <property type="term" value="F:identical protein binding"/>
    <property type="evidence" value="ECO:0007669"/>
    <property type="project" value="Ensembl"/>
</dbReference>
<dbReference type="GO" id="GO:0031267">
    <property type="term" value="F:small GTPase binding"/>
    <property type="evidence" value="ECO:0000250"/>
    <property type="project" value="UniProtKB"/>
</dbReference>
<dbReference type="GO" id="GO:0004842">
    <property type="term" value="F:ubiquitin-protein transferase activity"/>
    <property type="evidence" value="ECO:0007669"/>
    <property type="project" value="Ensembl"/>
</dbReference>
<dbReference type="GO" id="GO:0016477">
    <property type="term" value="P:cell migration"/>
    <property type="evidence" value="ECO:0000250"/>
    <property type="project" value="UniProtKB"/>
</dbReference>
<dbReference type="GO" id="GO:0006955">
    <property type="term" value="P:immune response"/>
    <property type="evidence" value="ECO:0000250"/>
    <property type="project" value="UniProtKB"/>
</dbReference>
<dbReference type="GO" id="GO:0035024">
    <property type="term" value="P:negative regulation of Rho protein signal transduction"/>
    <property type="evidence" value="ECO:0000250"/>
    <property type="project" value="UniProtKB"/>
</dbReference>
<dbReference type="GO" id="GO:0045740">
    <property type="term" value="P:positive regulation of DNA replication"/>
    <property type="evidence" value="ECO:0007669"/>
    <property type="project" value="Ensembl"/>
</dbReference>
<dbReference type="GO" id="GO:0043161">
    <property type="term" value="P:proteasome-mediated ubiquitin-dependent protein catabolic process"/>
    <property type="evidence" value="ECO:0000250"/>
    <property type="project" value="UniProtKB"/>
</dbReference>
<dbReference type="GO" id="GO:0051260">
    <property type="term" value="P:protein homooligomerization"/>
    <property type="evidence" value="ECO:0007669"/>
    <property type="project" value="InterPro"/>
</dbReference>
<dbReference type="GO" id="GO:0016567">
    <property type="term" value="P:protein ubiquitination"/>
    <property type="evidence" value="ECO:0000250"/>
    <property type="project" value="UniProtKB"/>
</dbReference>
<dbReference type="GO" id="GO:0043149">
    <property type="term" value="P:stress fiber assembly"/>
    <property type="evidence" value="ECO:0000250"/>
    <property type="project" value="UniProtKB"/>
</dbReference>
<dbReference type="CDD" id="cd18401">
    <property type="entry name" value="BTB_POZ_TNFAIP1_BACURD2"/>
    <property type="match status" value="1"/>
</dbReference>
<dbReference type="FunFam" id="3.30.710.10:FF:000013">
    <property type="entry name" value="BTB/POZ domain-containing adapter for CUL3-mediated RhoA degradation protein 3"/>
    <property type="match status" value="1"/>
</dbReference>
<dbReference type="Gene3D" id="3.30.710.10">
    <property type="entry name" value="Potassium Channel Kv1.1, Chain A"/>
    <property type="match status" value="1"/>
</dbReference>
<dbReference type="InterPro" id="IPR045068">
    <property type="entry name" value="BACURD1-3"/>
</dbReference>
<dbReference type="InterPro" id="IPR000210">
    <property type="entry name" value="BTB/POZ_dom"/>
</dbReference>
<dbReference type="InterPro" id="IPR011333">
    <property type="entry name" value="SKP1/BTB/POZ_sf"/>
</dbReference>
<dbReference type="InterPro" id="IPR003131">
    <property type="entry name" value="T1-type_BTB"/>
</dbReference>
<dbReference type="PANTHER" id="PTHR11145">
    <property type="entry name" value="BTB/POZ DOMAIN-CONTAINING ADAPTER FOR CUL3-MEDIATED RHOA DEGRADATION PROTEIN FAMILY MEMBER"/>
    <property type="match status" value="1"/>
</dbReference>
<dbReference type="PANTHER" id="PTHR11145:SF17">
    <property type="entry name" value="BTB_POZ DOMAIN-CONTAINING ADAPTER FOR CUL3-MEDIATED RHOA DEGRADATION PROTEIN 2"/>
    <property type="match status" value="1"/>
</dbReference>
<dbReference type="Pfam" id="PF02214">
    <property type="entry name" value="BTB_2"/>
    <property type="match status" value="1"/>
</dbReference>
<dbReference type="SMART" id="SM00225">
    <property type="entry name" value="BTB"/>
    <property type="match status" value="1"/>
</dbReference>
<dbReference type="SUPFAM" id="SSF54695">
    <property type="entry name" value="POZ domain"/>
    <property type="match status" value="1"/>
</dbReference>
<dbReference type="PROSITE" id="PS50097">
    <property type="entry name" value="BTB"/>
    <property type="match status" value="1"/>
</dbReference>
<evidence type="ECO:0000250" key="1"/>
<evidence type="ECO:0000250" key="2">
    <source>
        <dbReference type="UniProtKB" id="Q13829"/>
    </source>
</evidence>
<evidence type="ECO:0000255" key="3">
    <source>
        <dbReference type="PROSITE-ProRule" id="PRU00037"/>
    </source>
</evidence>
<evidence type="ECO:0000256" key="4">
    <source>
        <dbReference type="SAM" id="MobiDB-lite"/>
    </source>
</evidence>
<evidence type="ECO:0000305" key="5"/>
<gene>
    <name type="primary">Tnfaip1</name>
    <name type="synonym">Edp1</name>
</gene>